<comment type="catalytic activity">
    <reaction evidence="1">
        <text>D-arabinose 5-phosphate + phosphoenolpyruvate + H2O = 3-deoxy-alpha-D-manno-2-octulosonate-8-phosphate + phosphate</text>
        <dbReference type="Rhea" id="RHEA:14053"/>
        <dbReference type="ChEBI" id="CHEBI:15377"/>
        <dbReference type="ChEBI" id="CHEBI:43474"/>
        <dbReference type="ChEBI" id="CHEBI:57693"/>
        <dbReference type="ChEBI" id="CHEBI:58702"/>
        <dbReference type="ChEBI" id="CHEBI:85985"/>
        <dbReference type="EC" id="2.5.1.55"/>
    </reaction>
</comment>
<comment type="pathway">
    <text evidence="1">Carbohydrate biosynthesis; 3-deoxy-D-manno-octulosonate biosynthesis; 3-deoxy-D-manno-octulosonate from D-ribulose 5-phosphate: step 2/3.</text>
</comment>
<comment type="pathway">
    <text evidence="1">Bacterial outer membrane biogenesis; lipopolysaccharide biosynthesis.</text>
</comment>
<comment type="subcellular location">
    <subcellularLocation>
        <location evidence="1">Cytoplasm</location>
    </subcellularLocation>
</comment>
<comment type="similarity">
    <text evidence="1">Belongs to the KdsA family.</text>
</comment>
<reference key="1">
    <citation type="journal article" date="2004" name="Proc. Natl. Acad. Sci. U.S.A.">
        <title>Insights into the evolution of Yersinia pestis through whole-genome comparison with Yersinia pseudotuberculosis.</title>
        <authorList>
            <person name="Chain P.S.G."/>
            <person name="Carniel E."/>
            <person name="Larimer F.W."/>
            <person name="Lamerdin J."/>
            <person name="Stoutland P.O."/>
            <person name="Regala W.M."/>
            <person name="Georgescu A.M."/>
            <person name="Vergez L.M."/>
            <person name="Land M.L."/>
            <person name="Motin V.L."/>
            <person name="Brubaker R.R."/>
            <person name="Fowler J."/>
            <person name="Hinnebusch J."/>
            <person name="Marceau M."/>
            <person name="Medigue C."/>
            <person name="Simonet M."/>
            <person name="Chenal-Francisque V."/>
            <person name="Souza B."/>
            <person name="Dacheux D."/>
            <person name="Elliott J.M."/>
            <person name="Derbise A."/>
            <person name="Hauser L.J."/>
            <person name="Garcia E."/>
        </authorList>
    </citation>
    <scope>NUCLEOTIDE SEQUENCE [LARGE SCALE GENOMIC DNA]</scope>
    <source>
        <strain>IP32953</strain>
    </source>
</reference>
<organism>
    <name type="scientific">Yersinia pseudotuberculosis serotype I (strain IP32953)</name>
    <dbReference type="NCBI Taxonomy" id="273123"/>
    <lineage>
        <taxon>Bacteria</taxon>
        <taxon>Pseudomonadati</taxon>
        <taxon>Pseudomonadota</taxon>
        <taxon>Gammaproteobacteria</taxon>
        <taxon>Enterobacterales</taxon>
        <taxon>Yersiniaceae</taxon>
        <taxon>Yersinia</taxon>
    </lineage>
</organism>
<accession>Q66AX1</accession>
<gene>
    <name evidence="1" type="primary">kdsA</name>
    <name type="ordered locus">YPTB2009</name>
</gene>
<feature type="chain" id="PRO_0000187178" description="2-dehydro-3-deoxyphosphooctonate aldolase">
    <location>
        <begin position="1"/>
        <end position="284"/>
    </location>
</feature>
<protein>
    <recommendedName>
        <fullName evidence="1">2-dehydro-3-deoxyphosphooctonate aldolase</fullName>
        <ecNumber evidence="1">2.5.1.55</ecNumber>
    </recommendedName>
    <alternativeName>
        <fullName evidence="1">3-deoxy-D-manno-octulosonic acid 8-phosphate synthase</fullName>
    </alternativeName>
    <alternativeName>
        <fullName evidence="1">KDO-8-phosphate synthase</fullName>
        <shortName evidence="1">KDO 8-P synthase</shortName>
        <shortName evidence="1">KDOPS</shortName>
    </alternativeName>
    <alternativeName>
        <fullName evidence="1">Phospho-2-dehydro-3-deoxyoctonate aldolase</fullName>
    </alternativeName>
</protein>
<name>KDSA_YERPS</name>
<evidence type="ECO:0000255" key="1">
    <source>
        <dbReference type="HAMAP-Rule" id="MF_00056"/>
    </source>
</evidence>
<proteinExistence type="inferred from homology"/>
<keyword id="KW-0963">Cytoplasm</keyword>
<keyword id="KW-0448">Lipopolysaccharide biosynthesis</keyword>
<keyword id="KW-0808">Transferase</keyword>
<dbReference type="EC" id="2.5.1.55" evidence="1"/>
<dbReference type="EMBL" id="BX936398">
    <property type="protein sequence ID" value="CAH21247.1"/>
    <property type="molecule type" value="Genomic_DNA"/>
</dbReference>
<dbReference type="RefSeq" id="WP_002211232.1">
    <property type="nucleotide sequence ID" value="NZ_CP009712.1"/>
</dbReference>
<dbReference type="SMR" id="Q66AX1"/>
<dbReference type="GeneID" id="96665504"/>
<dbReference type="KEGG" id="ypo:BZ17_458"/>
<dbReference type="KEGG" id="yps:YPTB2009"/>
<dbReference type="PATRIC" id="fig|273123.14.peg.487"/>
<dbReference type="UniPathway" id="UPA00030"/>
<dbReference type="UniPathway" id="UPA00357">
    <property type="reaction ID" value="UER00474"/>
</dbReference>
<dbReference type="Proteomes" id="UP000001011">
    <property type="component" value="Chromosome"/>
</dbReference>
<dbReference type="GO" id="GO:0005737">
    <property type="term" value="C:cytoplasm"/>
    <property type="evidence" value="ECO:0007669"/>
    <property type="project" value="UniProtKB-SubCell"/>
</dbReference>
<dbReference type="GO" id="GO:0008676">
    <property type="term" value="F:3-deoxy-8-phosphooctulonate synthase activity"/>
    <property type="evidence" value="ECO:0007669"/>
    <property type="project" value="UniProtKB-UniRule"/>
</dbReference>
<dbReference type="GO" id="GO:0019294">
    <property type="term" value="P:keto-3-deoxy-D-manno-octulosonic acid biosynthetic process"/>
    <property type="evidence" value="ECO:0007669"/>
    <property type="project" value="UniProtKB-UniRule"/>
</dbReference>
<dbReference type="FunFam" id="3.20.20.70:FF:000058">
    <property type="entry name" value="2-dehydro-3-deoxyphosphooctonate aldolase"/>
    <property type="match status" value="1"/>
</dbReference>
<dbReference type="Gene3D" id="3.20.20.70">
    <property type="entry name" value="Aldolase class I"/>
    <property type="match status" value="1"/>
</dbReference>
<dbReference type="HAMAP" id="MF_00056">
    <property type="entry name" value="KDO8P_synth"/>
    <property type="match status" value="1"/>
</dbReference>
<dbReference type="InterPro" id="IPR013785">
    <property type="entry name" value="Aldolase_TIM"/>
</dbReference>
<dbReference type="InterPro" id="IPR006218">
    <property type="entry name" value="DAHP1/KDSA"/>
</dbReference>
<dbReference type="InterPro" id="IPR006269">
    <property type="entry name" value="KDO8P_synthase"/>
</dbReference>
<dbReference type="NCBIfam" id="TIGR01362">
    <property type="entry name" value="KDO8P_synth"/>
    <property type="match status" value="1"/>
</dbReference>
<dbReference type="NCBIfam" id="NF003543">
    <property type="entry name" value="PRK05198.1"/>
    <property type="match status" value="1"/>
</dbReference>
<dbReference type="NCBIfam" id="NF009109">
    <property type="entry name" value="PRK12457.1"/>
    <property type="match status" value="1"/>
</dbReference>
<dbReference type="PANTHER" id="PTHR21057">
    <property type="entry name" value="PHOSPHO-2-DEHYDRO-3-DEOXYHEPTONATE ALDOLASE"/>
    <property type="match status" value="1"/>
</dbReference>
<dbReference type="Pfam" id="PF00793">
    <property type="entry name" value="DAHP_synth_1"/>
    <property type="match status" value="1"/>
</dbReference>
<dbReference type="SUPFAM" id="SSF51569">
    <property type="entry name" value="Aldolase"/>
    <property type="match status" value="1"/>
</dbReference>
<sequence>MKQKVVSIGDINVANDLPFVLFGGMNVLESRDLAMRICEHYVTVTQKLGIPYVFKASFDKANRSSIHSYRGPGLEEGMKIFQELKQQFGVKVITDVHEASQAQPVSEVVDVIQLPAFLARQTDLVEAMARTGAVINVKKPQFVSPGQMGNIVEKFKEAGNDQVILCDRGSNFGYDNLVVDMLGINVMVQATGGHPVIFDVTHALQCRDPFGAASGGRRAQVAELARAGMAVGLAGLFIEAHPEPNSAKCDGPSALPLDKLEPFLVQMKAIDDLVKSFPALDTSK</sequence>